<keyword id="KW-0030">Aminoacyl-tRNA synthetase</keyword>
<keyword id="KW-0067">ATP-binding</keyword>
<keyword id="KW-0963">Cytoplasm</keyword>
<keyword id="KW-0436">Ligase</keyword>
<keyword id="KW-0547">Nucleotide-binding</keyword>
<keyword id="KW-0648">Protein biosynthesis</keyword>
<keyword id="KW-1185">Reference proteome</keyword>
<evidence type="ECO:0000255" key="1">
    <source>
        <dbReference type="HAMAP-Rule" id="MF_00123"/>
    </source>
</evidence>
<dbReference type="EC" id="6.1.1.19" evidence="1"/>
<dbReference type="EMBL" id="CP000304">
    <property type="protein sequence ID" value="ABP78253.1"/>
    <property type="molecule type" value="Genomic_DNA"/>
</dbReference>
<dbReference type="RefSeq" id="WP_011911780.1">
    <property type="nucleotide sequence ID" value="NC_009434.1"/>
</dbReference>
<dbReference type="SMR" id="A4VH02"/>
<dbReference type="KEGG" id="psa:PST_0547"/>
<dbReference type="eggNOG" id="COG0018">
    <property type="taxonomic scope" value="Bacteria"/>
</dbReference>
<dbReference type="HOGENOM" id="CLU_006406_5_1_6"/>
<dbReference type="Proteomes" id="UP000000233">
    <property type="component" value="Chromosome"/>
</dbReference>
<dbReference type="GO" id="GO:0005737">
    <property type="term" value="C:cytoplasm"/>
    <property type="evidence" value="ECO:0007669"/>
    <property type="project" value="UniProtKB-SubCell"/>
</dbReference>
<dbReference type="GO" id="GO:0004814">
    <property type="term" value="F:arginine-tRNA ligase activity"/>
    <property type="evidence" value="ECO:0007669"/>
    <property type="project" value="UniProtKB-UniRule"/>
</dbReference>
<dbReference type="GO" id="GO:0005524">
    <property type="term" value="F:ATP binding"/>
    <property type="evidence" value="ECO:0007669"/>
    <property type="project" value="UniProtKB-UniRule"/>
</dbReference>
<dbReference type="GO" id="GO:0006420">
    <property type="term" value="P:arginyl-tRNA aminoacylation"/>
    <property type="evidence" value="ECO:0007669"/>
    <property type="project" value="UniProtKB-UniRule"/>
</dbReference>
<dbReference type="CDD" id="cd07956">
    <property type="entry name" value="Anticodon_Ia_Arg"/>
    <property type="match status" value="1"/>
</dbReference>
<dbReference type="CDD" id="cd00671">
    <property type="entry name" value="ArgRS_core"/>
    <property type="match status" value="1"/>
</dbReference>
<dbReference type="FunFam" id="3.30.1360.70:FF:000003">
    <property type="entry name" value="Arginine--tRNA ligase"/>
    <property type="match status" value="1"/>
</dbReference>
<dbReference type="FunFam" id="3.40.50.620:FF:000030">
    <property type="entry name" value="Arginine--tRNA ligase"/>
    <property type="match status" value="1"/>
</dbReference>
<dbReference type="FunFam" id="1.10.730.10:FF:000006">
    <property type="entry name" value="Arginyl-tRNA synthetase 2, mitochondrial"/>
    <property type="match status" value="1"/>
</dbReference>
<dbReference type="Gene3D" id="3.30.1360.70">
    <property type="entry name" value="Arginyl tRNA synthetase N-terminal domain"/>
    <property type="match status" value="1"/>
</dbReference>
<dbReference type="Gene3D" id="3.40.50.620">
    <property type="entry name" value="HUPs"/>
    <property type="match status" value="1"/>
</dbReference>
<dbReference type="Gene3D" id="1.10.730.10">
    <property type="entry name" value="Isoleucyl-tRNA Synthetase, Domain 1"/>
    <property type="match status" value="1"/>
</dbReference>
<dbReference type="HAMAP" id="MF_00123">
    <property type="entry name" value="Arg_tRNA_synth"/>
    <property type="match status" value="1"/>
</dbReference>
<dbReference type="InterPro" id="IPR001412">
    <property type="entry name" value="aa-tRNA-synth_I_CS"/>
</dbReference>
<dbReference type="InterPro" id="IPR001278">
    <property type="entry name" value="Arg-tRNA-ligase"/>
</dbReference>
<dbReference type="InterPro" id="IPR005148">
    <property type="entry name" value="Arg-tRNA-synth_N"/>
</dbReference>
<dbReference type="InterPro" id="IPR036695">
    <property type="entry name" value="Arg-tRNA-synth_N_sf"/>
</dbReference>
<dbReference type="InterPro" id="IPR035684">
    <property type="entry name" value="ArgRS_core"/>
</dbReference>
<dbReference type="InterPro" id="IPR008909">
    <property type="entry name" value="DALR_anticod-bd"/>
</dbReference>
<dbReference type="InterPro" id="IPR014729">
    <property type="entry name" value="Rossmann-like_a/b/a_fold"/>
</dbReference>
<dbReference type="InterPro" id="IPR009080">
    <property type="entry name" value="tRNAsynth_Ia_anticodon-bd"/>
</dbReference>
<dbReference type="NCBIfam" id="TIGR00456">
    <property type="entry name" value="argS"/>
    <property type="match status" value="1"/>
</dbReference>
<dbReference type="PANTHER" id="PTHR11956:SF5">
    <property type="entry name" value="ARGININE--TRNA LIGASE, CYTOPLASMIC"/>
    <property type="match status" value="1"/>
</dbReference>
<dbReference type="PANTHER" id="PTHR11956">
    <property type="entry name" value="ARGINYL-TRNA SYNTHETASE"/>
    <property type="match status" value="1"/>
</dbReference>
<dbReference type="Pfam" id="PF03485">
    <property type="entry name" value="Arg_tRNA_synt_N"/>
    <property type="match status" value="1"/>
</dbReference>
<dbReference type="Pfam" id="PF05746">
    <property type="entry name" value="DALR_1"/>
    <property type="match status" value="1"/>
</dbReference>
<dbReference type="Pfam" id="PF00750">
    <property type="entry name" value="tRNA-synt_1d"/>
    <property type="match status" value="1"/>
</dbReference>
<dbReference type="PRINTS" id="PR01038">
    <property type="entry name" value="TRNASYNTHARG"/>
</dbReference>
<dbReference type="SMART" id="SM01016">
    <property type="entry name" value="Arg_tRNA_synt_N"/>
    <property type="match status" value="1"/>
</dbReference>
<dbReference type="SMART" id="SM00836">
    <property type="entry name" value="DALR_1"/>
    <property type="match status" value="1"/>
</dbReference>
<dbReference type="SUPFAM" id="SSF47323">
    <property type="entry name" value="Anticodon-binding domain of a subclass of class I aminoacyl-tRNA synthetases"/>
    <property type="match status" value="1"/>
</dbReference>
<dbReference type="SUPFAM" id="SSF55190">
    <property type="entry name" value="Arginyl-tRNA synthetase (ArgRS), N-terminal 'additional' domain"/>
    <property type="match status" value="1"/>
</dbReference>
<dbReference type="SUPFAM" id="SSF52374">
    <property type="entry name" value="Nucleotidylyl transferase"/>
    <property type="match status" value="1"/>
</dbReference>
<dbReference type="PROSITE" id="PS00178">
    <property type="entry name" value="AA_TRNA_LIGASE_I"/>
    <property type="match status" value="1"/>
</dbReference>
<feature type="chain" id="PRO_1000018095" description="Arginine--tRNA ligase">
    <location>
        <begin position="1"/>
        <end position="579"/>
    </location>
</feature>
<feature type="short sequence motif" description="'HIGH' region">
    <location>
        <begin position="127"/>
        <end position="137"/>
    </location>
</feature>
<protein>
    <recommendedName>
        <fullName evidence="1">Arginine--tRNA ligase</fullName>
        <ecNumber evidence="1">6.1.1.19</ecNumber>
    </recommendedName>
    <alternativeName>
        <fullName evidence="1">Arginyl-tRNA synthetase</fullName>
        <shortName evidence="1">ArgRS</shortName>
    </alternativeName>
</protein>
<gene>
    <name evidence="1" type="primary">argS</name>
    <name type="ordered locus">PST_0547</name>
</gene>
<accession>A4VH02</accession>
<comment type="catalytic activity">
    <reaction evidence="1">
        <text>tRNA(Arg) + L-arginine + ATP = L-arginyl-tRNA(Arg) + AMP + diphosphate</text>
        <dbReference type="Rhea" id="RHEA:20301"/>
        <dbReference type="Rhea" id="RHEA-COMP:9658"/>
        <dbReference type="Rhea" id="RHEA-COMP:9673"/>
        <dbReference type="ChEBI" id="CHEBI:30616"/>
        <dbReference type="ChEBI" id="CHEBI:32682"/>
        <dbReference type="ChEBI" id="CHEBI:33019"/>
        <dbReference type="ChEBI" id="CHEBI:78442"/>
        <dbReference type="ChEBI" id="CHEBI:78513"/>
        <dbReference type="ChEBI" id="CHEBI:456215"/>
        <dbReference type="EC" id="6.1.1.19"/>
    </reaction>
</comment>
<comment type="subunit">
    <text evidence="1">Monomer.</text>
</comment>
<comment type="subcellular location">
    <subcellularLocation>
        <location evidence="1">Cytoplasm</location>
    </subcellularLocation>
</comment>
<comment type="similarity">
    <text evidence="1">Belongs to the class-I aminoacyl-tRNA synthetase family.</text>
</comment>
<organism>
    <name type="scientific">Stutzerimonas stutzeri (strain A1501)</name>
    <name type="common">Pseudomonas stutzeri</name>
    <dbReference type="NCBI Taxonomy" id="379731"/>
    <lineage>
        <taxon>Bacteria</taxon>
        <taxon>Pseudomonadati</taxon>
        <taxon>Pseudomonadota</taxon>
        <taxon>Gammaproteobacteria</taxon>
        <taxon>Pseudomonadales</taxon>
        <taxon>Pseudomonadaceae</taxon>
        <taxon>Stutzerimonas</taxon>
    </lineage>
</organism>
<name>SYR_STUS1</name>
<reference key="1">
    <citation type="journal article" date="2008" name="Proc. Natl. Acad. Sci. U.S.A.">
        <title>Nitrogen fixation island and rhizosphere competence traits in the genome of root-associated Pseudomonas stutzeri A1501.</title>
        <authorList>
            <person name="Yan Y."/>
            <person name="Yang J."/>
            <person name="Dou Y."/>
            <person name="Chen M."/>
            <person name="Ping S."/>
            <person name="Peng J."/>
            <person name="Lu W."/>
            <person name="Zhang W."/>
            <person name="Yao Z."/>
            <person name="Li H."/>
            <person name="Liu W."/>
            <person name="He S."/>
            <person name="Geng L."/>
            <person name="Zhang X."/>
            <person name="Yang F."/>
            <person name="Yu H."/>
            <person name="Zhan Y."/>
            <person name="Li D."/>
            <person name="Lin Z."/>
            <person name="Wang Y."/>
            <person name="Elmerich C."/>
            <person name="Lin M."/>
            <person name="Jin Q."/>
        </authorList>
    </citation>
    <scope>NUCLEOTIDE SEQUENCE [LARGE SCALE GENOMIC DNA]</scope>
    <source>
        <strain>A1501</strain>
    </source>
</reference>
<sequence length="579" mass="64116">MKDSIRHLIQQALVRLTSEGVLPEGLTPAIQVENTKDKSHGDFASNIAMMLAKPAGMKPRELAEKLIAALPQDAQISKVEIAGPGFLNFFQNSDALAQRLETALADAQLAVHKASAKQRVVIDLSSPNLAKEMHVGHLRSTIIGDAVGRVLEFLGDEVIRQNHVGDWGTQFGMLLAYLEEKPAAAESELADLEQFYRAAKQRFDESPEFADRARELVVKLQAGDAQCLSLWTRFNDISLSHCQKIYDRLNVKLTPADVKGESAYNADLADIVEALREKGLLTEDNGAQCVFLDEFKNAEGNPLPVIVQKAGGGYLYATTDLAAMRYRSQQLHADRVLYFVDQRQALHFQMAFEVARRAGFVHEGMQLEHMGFGTMNGADGRPFKTRDGGTVKLIDLLDEAEQRAYTLVKGKNPELDEAELRQIARAVGISAVKYADLSKHRTSDYRFNFELMLSFEGNTAPYLLYAYTRVASVFRKLGKGIDEISGQIQLDAEQELALAAKLAQFGEVLNSVGEKGEPHLLCAYLYDLAGLFSSFYEHCPILGAEQEAQKQSRLRLAALTGRTLKQGLELLGLEPLERM</sequence>
<proteinExistence type="inferred from homology"/>